<name>CC171_MOUSE</name>
<protein>
    <recommendedName>
        <fullName>Coiled-coil domain-containing protein 171</fullName>
    </recommendedName>
</protein>
<sequence length="1324" mass="152309">MSLNTSSNATPGDTQRLKNASLDVKQMLKNETESDIIADLRKKLHRAKKEKLEMTTKHNAELSSYESQIARLRSEVEKGEALRQRLEYDLAVARKEAGLGRRAAEERLAEAQRIQERLCAQNSELQGKANEIEKTFQISQEKWREECRRFEHDLEERDNIIQNCNQEYESLMQEKTRLQKTLQEILEKHEQEKTELESRVRETALGEFRLQTEEWEAERRELQLIVQEQDSAVQSMQKKVEQLEAEHMDCSDLLRRQTSELEFSTQREERLRKEFEATTLRVRKLEENIEAERAAHLESKFNSEIIQLRIRDLEGALQVEKASQAEAVADLEMIKNEFKEVESAYEREKQNTQESCAKLNLLEREYFSQNKKLNEEIEDQKKVIIDLSKRLQYNEKSCGELQEELVMAKKHQAFLVETCENNVRELESILGSFSVSAQWTSGVHKDKDKPPSFSVVLETLRRTLTDYQNKLEDASNEEKTSNELDSTKQKIETHIKNTKELQDKLTEVHKELSHLRAKCADREALITSLKVELQNVLHCWEKEKACAAQCESELQKLSQAFQKDSEEKLTFLHTLYQHLVAGCVLIKQPEGMLDKFSWSELCAVLQENVDALIADLNRANEKISHLEYICKNKSDTMRELQQTQEDTFNKVAEQIKAQESCWQKQKKELEFQYSELLLEVQRRAQKFQEIAEKNSEKLNRIETSHEQLVRENSHFKTTLSRTQREQTCLLAACALMAGALCPLYSRSCALSTQRDFLQEQVNSLELFKLEIRTLAQALSAVDEKKQEEAKTKKKTFKGLVRVFRKGVIAILAANRLKLLGQSCAFLFTWMESCKEGIGMLVCTGEPKDKRQFPKHQREQLRCLQALAWLTSSDLLGTVISSMTELQEVISKTDPNSRICGHLLIGAAKNSFAKLMDKLSSAMASIPLHSSRSITYVEKDSLVQRLARGLHKVNTLALKYGLCSHIPIMKSTAALQKQIFGFTQRLHAAEVERRSLRLEVTEYKRTVHEMKKELDKSQSLQTQLNEFKHSKLITHEKFESACEELNNALLREQQAQMLLNEQAQQLQELNYRLELHSSEEADKNQTLGEAVKSLSEAKMELRRKDQSLRQLNRHLTQLEQDKRRLEENIRDAESALRMAAKDKECVANHMRTIENMLHKVRDQISLSRTAATRNDFTLQLPKLHLETFAMEGLQGGPEVVACQAMIKSFMDVYQLASARISTLEKEMTSHRSHIATLKSELHTACLRENESLQSMGSRDHSNLSVPSRAAAPMDTVGDLLPLQAELDTTYTFLKETFVNTAPHSLSSQSSPGVPTNAKRPSQIGL</sequence>
<dbReference type="EMBL" id="AL928772">
    <property type="status" value="NOT_ANNOTATED_CDS"/>
    <property type="molecule type" value="Genomic_DNA"/>
</dbReference>
<dbReference type="EMBL" id="BX682545">
    <property type="status" value="NOT_ANNOTATED_CDS"/>
    <property type="molecule type" value="Genomic_DNA"/>
</dbReference>
<dbReference type="EMBL" id="BX936355">
    <property type="status" value="NOT_ANNOTATED_CDS"/>
    <property type="molecule type" value="Genomic_DNA"/>
</dbReference>
<dbReference type="EMBL" id="CR405712">
    <property type="status" value="NOT_ANNOTATED_CDS"/>
    <property type="molecule type" value="Genomic_DNA"/>
</dbReference>
<dbReference type="EMBL" id="AK041005">
    <property type="protein sequence ID" value="BAC30777.1"/>
    <property type="molecule type" value="mRNA"/>
</dbReference>
<dbReference type="CCDS" id="CCDS89772.1">
    <molecule id="E9Q1U1-2"/>
</dbReference>
<dbReference type="RefSeq" id="NP_001074481.1">
    <property type="nucleotide sequence ID" value="NM_001081012.1"/>
</dbReference>
<dbReference type="RefSeq" id="NP_001342307.1">
    <molecule id="E9Q1U1-2"/>
    <property type="nucleotide sequence ID" value="NM_001355378.1"/>
</dbReference>
<dbReference type="RefSeq" id="XP_006538051.1">
    <property type="nucleotide sequence ID" value="XM_006537988.3"/>
</dbReference>
<dbReference type="RefSeq" id="XP_006538052.1">
    <molecule id="E9Q1U1-2"/>
    <property type="nucleotide sequence ID" value="XM_006537989.5"/>
</dbReference>
<dbReference type="SMR" id="E9Q1U1"/>
<dbReference type="BioGRID" id="235857">
    <property type="interactions" value="1"/>
</dbReference>
<dbReference type="FunCoup" id="E9Q1U1">
    <property type="interactions" value="90"/>
</dbReference>
<dbReference type="STRING" id="10090.ENSMUSP00000056520"/>
<dbReference type="GlyGen" id="E9Q1U1">
    <property type="glycosylation" value="1 site"/>
</dbReference>
<dbReference type="PhosphoSitePlus" id="E9Q1U1"/>
<dbReference type="SwissPalm" id="E9Q1U1"/>
<dbReference type="PaxDb" id="10090-ENSMUSP00000056520"/>
<dbReference type="ProteomicsDB" id="283715">
    <molecule id="E9Q1U1-1"/>
</dbReference>
<dbReference type="ProteomicsDB" id="283716">
    <molecule id="E9Q1U1-2"/>
</dbReference>
<dbReference type="Antibodypedia" id="10105">
    <property type="antibodies" value="56 antibodies from 8 providers"/>
</dbReference>
<dbReference type="Ensembl" id="ENSMUST00000053414.13">
    <molecule id="E9Q1U1-1"/>
    <property type="protein sequence ID" value="ENSMUSP00000056520.7"/>
    <property type="gene ID" value="ENSMUSG00000052407.18"/>
</dbReference>
<dbReference type="Ensembl" id="ENSMUST00000231339.2">
    <molecule id="E9Q1U1-2"/>
    <property type="protein sequence ID" value="ENSMUSP00000155912.2"/>
    <property type="gene ID" value="ENSMUSG00000052407.18"/>
</dbReference>
<dbReference type="GeneID" id="320226"/>
<dbReference type="UCSC" id="uc008tlc.1">
    <molecule id="E9Q1U1-1"/>
    <property type="organism name" value="mouse"/>
</dbReference>
<dbReference type="AGR" id="MGI:1922152"/>
<dbReference type="CTD" id="203238"/>
<dbReference type="MGI" id="MGI:1922152">
    <property type="gene designation" value="Ccdc171"/>
</dbReference>
<dbReference type="VEuPathDB" id="HostDB:ENSMUSG00000052407"/>
<dbReference type="eggNOG" id="ENOG502QT2H">
    <property type="taxonomic scope" value="Eukaryota"/>
</dbReference>
<dbReference type="GeneTree" id="ENSGT00390000007924"/>
<dbReference type="HOGENOM" id="CLU_007506_0_0_1"/>
<dbReference type="InParanoid" id="E9Q1U1"/>
<dbReference type="OMA" id="CRRFECD"/>
<dbReference type="PhylomeDB" id="E9Q1U1"/>
<dbReference type="TreeFam" id="TF330625"/>
<dbReference type="BioGRID-ORCS" id="320226">
    <property type="hits" value="1 hit in 77 CRISPR screens"/>
</dbReference>
<dbReference type="ChiTaRS" id="Ccdc171">
    <property type="organism name" value="mouse"/>
</dbReference>
<dbReference type="PRO" id="PR:E9Q1U1"/>
<dbReference type="Proteomes" id="UP000000589">
    <property type="component" value="Chromosome 4"/>
</dbReference>
<dbReference type="RNAct" id="E9Q1U1">
    <property type="molecule type" value="protein"/>
</dbReference>
<dbReference type="Bgee" id="ENSMUSG00000052407">
    <property type="expression patterns" value="Expressed in animal zygote and 84 other cell types or tissues"/>
</dbReference>
<dbReference type="ExpressionAtlas" id="E9Q1U1">
    <property type="expression patterns" value="baseline and differential"/>
</dbReference>
<dbReference type="InterPro" id="IPR038820">
    <property type="entry name" value="CCDC171"/>
</dbReference>
<dbReference type="PANTHER" id="PTHR47899">
    <property type="entry name" value="COILED-COIL DOMAIN-CONTAINING PROTEIN 171"/>
    <property type="match status" value="1"/>
</dbReference>
<dbReference type="PANTHER" id="PTHR47899:SF1">
    <property type="entry name" value="COILED-COIL DOMAIN-CONTAINING PROTEIN 171"/>
    <property type="match status" value="1"/>
</dbReference>
<proteinExistence type="evidence at transcript level"/>
<keyword id="KW-0025">Alternative splicing</keyword>
<keyword id="KW-0175">Coiled coil</keyword>
<keyword id="KW-1185">Reference proteome</keyword>
<accession>E9Q1U1</accession>
<accession>Q8BLX2</accession>
<feature type="chain" id="PRO_0000417502" description="Coiled-coil domain-containing protein 171">
    <location>
        <begin position="1"/>
        <end position="1324"/>
    </location>
</feature>
<feature type="region of interest" description="Disordered" evidence="2">
    <location>
        <begin position="1301"/>
        <end position="1324"/>
    </location>
</feature>
<feature type="coiled-coil region" evidence="1">
    <location>
        <begin position="29"/>
        <end position="296"/>
    </location>
</feature>
<feature type="coiled-coil region" evidence="1">
    <location>
        <begin position="325"/>
        <end position="393"/>
    </location>
</feature>
<feature type="coiled-coil region" evidence="1">
    <location>
        <begin position="453"/>
        <end position="521"/>
    </location>
</feature>
<feature type="coiled-coil region" evidence="1">
    <location>
        <begin position="599"/>
        <end position="712"/>
    </location>
</feature>
<feature type="coiled-coil region" evidence="1">
    <location>
        <begin position="981"/>
        <end position="1145"/>
    </location>
</feature>
<feature type="compositionally biased region" description="Polar residues" evidence="2">
    <location>
        <begin position="1301"/>
        <end position="1312"/>
    </location>
</feature>
<feature type="splice variant" id="VSP_043769" description="In isoform 2." evidence="3">
    <original>E</original>
    <variation>ELNNINDAK</variation>
    <location>
        <position position="477"/>
    </location>
</feature>
<evidence type="ECO:0000255" key="1"/>
<evidence type="ECO:0000256" key="2">
    <source>
        <dbReference type="SAM" id="MobiDB-lite"/>
    </source>
</evidence>
<evidence type="ECO:0000305" key="3"/>
<gene>
    <name type="primary">Ccdc171</name>
</gene>
<comment type="alternative products">
    <event type="alternative splicing"/>
    <isoform>
        <id>E9Q1U1-1</id>
        <name>1</name>
        <sequence type="displayed"/>
    </isoform>
    <isoform>
        <id>E9Q1U1-2</id>
        <name>2</name>
        <sequence type="described" ref="VSP_043769"/>
    </isoform>
</comment>
<organism>
    <name type="scientific">Mus musculus</name>
    <name type="common">Mouse</name>
    <dbReference type="NCBI Taxonomy" id="10090"/>
    <lineage>
        <taxon>Eukaryota</taxon>
        <taxon>Metazoa</taxon>
        <taxon>Chordata</taxon>
        <taxon>Craniata</taxon>
        <taxon>Vertebrata</taxon>
        <taxon>Euteleostomi</taxon>
        <taxon>Mammalia</taxon>
        <taxon>Eutheria</taxon>
        <taxon>Euarchontoglires</taxon>
        <taxon>Glires</taxon>
        <taxon>Rodentia</taxon>
        <taxon>Myomorpha</taxon>
        <taxon>Muroidea</taxon>
        <taxon>Muridae</taxon>
        <taxon>Murinae</taxon>
        <taxon>Mus</taxon>
        <taxon>Mus</taxon>
    </lineage>
</organism>
<reference key="1">
    <citation type="journal article" date="2009" name="PLoS Biol.">
        <title>Lineage-specific biology revealed by a finished genome assembly of the mouse.</title>
        <authorList>
            <person name="Church D.M."/>
            <person name="Goodstadt L."/>
            <person name="Hillier L.W."/>
            <person name="Zody M.C."/>
            <person name="Goldstein S."/>
            <person name="She X."/>
            <person name="Bult C.J."/>
            <person name="Agarwala R."/>
            <person name="Cherry J.L."/>
            <person name="DiCuccio M."/>
            <person name="Hlavina W."/>
            <person name="Kapustin Y."/>
            <person name="Meric P."/>
            <person name="Maglott D."/>
            <person name="Birtle Z."/>
            <person name="Marques A.C."/>
            <person name="Graves T."/>
            <person name="Zhou S."/>
            <person name="Teague B."/>
            <person name="Potamousis K."/>
            <person name="Churas C."/>
            <person name="Place M."/>
            <person name="Herschleb J."/>
            <person name="Runnheim R."/>
            <person name="Forrest D."/>
            <person name="Amos-Landgraf J."/>
            <person name="Schwartz D.C."/>
            <person name="Cheng Z."/>
            <person name="Lindblad-Toh K."/>
            <person name="Eichler E.E."/>
            <person name="Ponting C.P."/>
        </authorList>
    </citation>
    <scope>NUCLEOTIDE SEQUENCE [LARGE SCALE GENOMIC DNA]</scope>
    <source>
        <strain>C57BL/6J</strain>
    </source>
</reference>
<reference key="2">
    <citation type="journal article" date="2005" name="Science">
        <title>The transcriptional landscape of the mammalian genome.</title>
        <authorList>
            <person name="Carninci P."/>
            <person name="Kasukawa T."/>
            <person name="Katayama S."/>
            <person name="Gough J."/>
            <person name="Frith M.C."/>
            <person name="Maeda N."/>
            <person name="Oyama R."/>
            <person name="Ravasi T."/>
            <person name="Lenhard B."/>
            <person name="Wells C."/>
            <person name="Kodzius R."/>
            <person name="Shimokawa K."/>
            <person name="Bajic V.B."/>
            <person name="Brenner S.E."/>
            <person name="Batalov S."/>
            <person name="Forrest A.R."/>
            <person name="Zavolan M."/>
            <person name="Davis M.J."/>
            <person name="Wilming L.G."/>
            <person name="Aidinis V."/>
            <person name="Allen J.E."/>
            <person name="Ambesi-Impiombato A."/>
            <person name="Apweiler R."/>
            <person name="Aturaliya R.N."/>
            <person name="Bailey T.L."/>
            <person name="Bansal M."/>
            <person name="Baxter L."/>
            <person name="Beisel K.W."/>
            <person name="Bersano T."/>
            <person name="Bono H."/>
            <person name="Chalk A.M."/>
            <person name="Chiu K.P."/>
            <person name="Choudhary V."/>
            <person name="Christoffels A."/>
            <person name="Clutterbuck D.R."/>
            <person name="Crowe M.L."/>
            <person name="Dalla E."/>
            <person name="Dalrymple B.P."/>
            <person name="de Bono B."/>
            <person name="Della Gatta G."/>
            <person name="di Bernardo D."/>
            <person name="Down T."/>
            <person name="Engstrom P."/>
            <person name="Fagiolini M."/>
            <person name="Faulkner G."/>
            <person name="Fletcher C.F."/>
            <person name="Fukushima T."/>
            <person name="Furuno M."/>
            <person name="Futaki S."/>
            <person name="Gariboldi M."/>
            <person name="Georgii-Hemming P."/>
            <person name="Gingeras T.R."/>
            <person name="Gojobori T."/>
            <person name="Green R.E."/>
            <person name="Gustincich S."/>
            <person name="Harbers M."/>
            <person name="Hayashi Y."/>
            <person name="Hensch T.K."/>
            <person name="Hirokawa N."/>
            <person name="Hill D."/>
            <person name="Huminiecki L."/>
            <person name="Iacono M."/>
            <person name="Ikeo K."/>
            <person name="Iwama A."/>
            <person name="Ishikawa T."/>
            <person name="Jakt M."/>
            <person name="Kanapin A."/>
            <person name="Katoh M."/>
            <person name="Kawasawa Y."/>
            <person name="Kelso J."/>
            <person name="Kitamura H."/>
            <person name="Kitano H."/>
            <person name="Kollias G."/>
            <person name="Krishnan S.P."/>
            <person name="Kruger A."/>
            <person name="Kummerfeld S.K."/>
            <person name="Kurochkin I.V."/>
            <person name="Lareau L.F."/>
            <person name="Lazarevic D."/>
            <person name="Lipovich L."/>
            <person name="Liu J."/>
            <person name="Liuni S."/>
            <person name="McWilliam S."/>
            <person name="Madan Babu M."/>
            <person name="Madera M."/>
            <person name="Marchionni L."/>
            <person name="Matsuda H."/>
            <person name="Matsuzawa S."/>
            <person name="Miki H."/>
            <person name="Mignone F."/>
            <person name="Miyake S."/>
            <person name="Morris K."/>
            <person name="Mottagui-Tabar S."/>
            <person name="Mulder N."/>
            <person name="Nakano N."/>
            <person name="Nakauchi H."/>
            <person name="Ng P."/>
            <person name="Nilsson R."/>
            <person name="Nishiguchi S."/>
            <person name="Nishikawa S."/>
            <person name="Nori F."/>
            <person name="Ohara O."/>
            <person name="Okazaki Y."/>
            <person name="Orlando V."/>
            <person name="Pang K.C."/>
            <person name="Pavan W.J."/>
            <person name="Pavesi G."/>
            <person name="Pesole G."/>
            <person name="Petrovsky N."/>
            <person name="Piazza S."/>
            <person name="Reed J."/>
            <person name="Reid J.F."/>
            <person name="Ring B.Z."/>
            <person name="Ringwald M."/>
            <person name="Rost B."/>
            <person name="Ruan Y."/>
            <person name="Salzberg S.L."/>
            <person name="Sandelin A."/>
            <person name="Schneider C."/>
            <person name="Schoenbach C."/>
            <person name="Sekiguchi K."/>
            <person name="Semple C.A."/>
            <person name="Seno S."/>
            <person name="Sessa L."/>
            <person name="Sheng Y."/>
            <person name="Shibata Y."/>
            <person name="Shimada H."/>
            <person name="Shimada K."/>
            <person name="Silva D."/>
            <person name="Sinclair B."/>
            <person name="Sperling S."/>
            <person name="Stupka E."/>
            <person name="Sugiura K."/>
            <person name="Sultana R."/>
            <person name="Takenaka Y."/>
            <person name="Taki K."/>
            <person name="Tammoja K."/>
            <person name="Tan S.L."/>
            <person name="Tang S."/>
            <person name="Taylor M.S."/>
            <person name="Tegner J."/>
            <person name="Teichmann S.A."/>
            <person name="Ueda H.R."/>
            <person name="van Nimwegen E."/>
            <person name="Verardo R."/>
            <person name="Wei C.L."/>
            <person name="Yagi K."/>
            <person name="Yamanishi H."/>
            <person name="Zabarovsky E."/>
            <person name="Zhu S."/>
            <person name="Zimmer A."/>
            <person name="Hide W."/>
            <person name="Bult C."/>
            <person name="Grimmond S.M."/>
            <person name="Teasdale R.D."/>
            <person name="Liu E.T."/>
            <person name="Brusic V."/>
            <person name="Quackenbush J."/>
            <person name="Wahlestedt C."/>
            <person name="Mattick J.S."/>
            <person name="Hume D.A."/>
            <person name="Kai C."/>
            <person name="Sasaki D."/>
            <person name="Tomaru Y."/>
            <person name="Fukuda S."/>
            <person name="Kanamori-Katayama M."/>
            <person name="Suzuki M."/>
            <person name="Aoki J."/>
            <person name="Arakawa T."/>
            <person name="Iida J."/>
            <person name="Imamura K."/>
            <person name="Itoh M."/>
            <person name="Kato T."/>
            <person name="Kawaji H."/>
            <person name="Kawagashira N."/>
            <person name="Kawashima T."/>
            <person name="Kojima M."/>
            <person name="Kondo S."/>
            <person name="Konno H."/>
            <person name="Nakano K."/>
            <person name="Ninomiya N."/>
            <person name="Nishio T."/>
            <person name="Okada M."/>
            <person name="Plessy C."/>
            <person name="Shibata K."/>
            <person name="Shiraki T."/>
            <person name="Suzuki S."/>
            <person name="Tagami M."/>
            <person name="Waki K."/>
            <person name="Watahiki A."/>
            <person name="Okamura-Oho Y."/>
            <person name="Suzuki H."/>
            <person name="Kawai J."/>
            <person name="Hayashizaki Y."/>
        </authorList>
    </citation>
    <scope>NUCLEOTIDE SEQUENCE [LARGE SCALE MRNA] OF 1-368 (ISOFORMS 1/2)</scope>
    <source>
        <strain>C57BL/6J</strain>
        <tissue>Aorta</tissue>
        <tissue>Vein</tissue>
    </source>
</reference>